<gene>
    <name evidence="1" type="primary">rpmA</name>
    <name type="ordered locus">BSUIS_B1326</name>
</gene>
<organism>
    <name type="scientific">Brucella suis (strain ATCC 23445 / NCTC 10510)</name>
    <dbReference type="NCBI Taxonomy" id="470137"/>
    <lineage>
        <taxon>Bacteria</taxon>
        <taxon>Pseudomonadati</taxon>
        <taxon>Pseudomonadota</taxon>
        <taxon>Alphaproteobacteria</taxon>
        <taxon>Hyphomicrobiales</taxon>
        <taxon>Brucellaceae</taxon>
        <taxon>Brucella/Ochrobactrum group</taxon>
        <taxon>Brucella</taxon>
    </lineage>
</organism>
<comment type="similarity">
    <text evidence="1">Belongs to the bacterial ribosomal protein bL27 family.</text>
</comment>
<proteinExistence type="inferred from homology"/>
<reference key="1">
    <citation type="submission" date="2007-12" db="EMBL/GenBank/DDBJ databases">
        <title>Brucella suis ATCC 23445 whole genome shotgun sequencing project.</title>
        <authorList>
            <person name="Setubal J.C."/>
            <person name="Bowns C."/>
            <person name="Boyle S."/>
            <person name="Crasta O.R."/>
            <person name="Czar M.J."/>
            <person name="Dharmanolla C."/>
            <person name="Gillespie J.J."/>
            <person name="Kenyon R.W."/>
            <person name="Lu J."/>
            <person name="Mane S."/>
            <person name="Mohapatra S."/>
            <person name="Nagrani S."/>
            <person name="Purkayastha A."/>
            <person name="Rajasimha H.K."/>
            <person name="Shallom J.M."/>
            <person name="Shallom S."/>
            <person name="Shukla M."/>
            <person name="Snyder E.E."/>
            <person name="Sobral B.W."/>
            <person name="Wattam A.R."/>
            <person name="Will R."/>
            <person name="Williams K."/>
            <person name="Yoo H."/>
            <person name="Bruce D."/>
            <person name="Detter C."/>
            <person name="Munk C."/>
            <person name="Brettin T.S."/>
        </authorList>
    </citation>
    <scope>NUCLEOTIDE SEQUENCE [LARGE SCALE GENOMIC DNA]</scope>
    <source>
        <strain>ATCC 23445 / NCTC 10510</strain>
    </source>
</reference>
<keyword id="KW-0687">Ribonucleoprotein</keyword>
<keyword id="KW-0689">Ribosomal protein</keyword>
<protein>
    <recommendedName>
        <fullName evidence="1">Large ribosomal subunit protein bL27</fullName>
    </recommendedName>
    <alternativeName>
        <fullName evidence="3">50S ribosomal protein L27</fullName>
    </alternativeName>
</protein>
<accession>A9WWX2</accession>
<evidence type="ECO:0000255" key="1">
    <source>
        <dbReference type="HAMAP-Rule" id="MF_00539"/>
    </source>
</evidence>
<evidence type="ECO:0000256" key="2">
    <source>
        <dbReference type="SAM" id="MobiDB-lite"/>
    </source>
</evidence>
<evidence type="ECO:0000305" key="3"/>
<sequence>MAHKKAGGSSRNGRDSESKRLGVKKFGGEAVLAGNIIVRQRGTKWHPGANVGLGKDHTIFATVNGSVSFRTKANGRTYVSVNPIAEAAE</sequence>
<name>RL27_BRUSI</name>
<feature type="chain" id="PRO_1000081877" description="Large ribosomal subunit protein bL27">
    <location>
        <begin position="1"/>
        <end position="89"/>
    </location>
</feature>
<feature type="region of interest" description="Disordered" evidence="2">
    <location>
        <begin position="1"/>
        <end position="22"/>
    </location>
</feature>
<dbReference type="EMBL" id="CP000912">
    <property type="protein sequence ID" value="ABY40258.1"/>
    <property type="molecule type" value="Genomic_DNA"/>
</dbReference>
<dbReference type="RefSeq" id="WP_002964927.1">
    <property type="nucleotide sequence ID" value="NC_010167.1"/>
</dbReference>
<dbReference type="SMR" id="A9WWX2"/>
<dbReference type="GeneID" id="93017814"/>
<dbReference type="KEGG" id="bmt:BSUIS_B1326"/>
<dbReference type="HOGENOM" id="CLU_095424_4_1_5"/>
<dbReference type="Proteomes" id="UP000008545">
    <property type="component" value="Chromosome II"/>
</dbReference>
<dbReference type="GO" id="GO:0022625">
    <property type="term" value="C:cytosolic large ribosomal subunit"/>
    <property type="evidence" value="ECO:0007669"/>
    <property type="project" value="TreeGrafter"/>
</dbReference>
<dbReference type="GO" id="GO:0003735">
    <property type="term" value="F:structural constituent of ribosome"/>
    <property type="evidence" value="ECO:0007669"/>
    <property type="project" value="InterPro"/>
</dbReference>
<dbReference type="GO" id="GO:0006412">
    <property type="term" value="P:translation"/>
    <property type="evidence" value="ECO:0007669"/>
    <property type="project" value="UniProtKB-UniRule"/>
</dbReference>
<dbReference type="FunFam" id="2.40.50.100:FF:000020">
    <property type="entry name" value="50S ribosomal protein L27"/>
    <property type="match status" value="1"/>
</dbReference>
<dbReference type="Gene3D" id="2.40.50.100">
    <property type="match status" value="1"/>
</dbReference>
<dbReference type="HAMAP" id="MF_00539">
    <property type="entry name" value="Ribosomal_bL27"/>
    <property type="match status" value="1"/>
</dbReference>
<dbReference type="InterPro" id="IPR001684">
    <property type="entry name" value="Ribosomal_bL27"/>
</dbReference>
<dbReference type="InterPro" id="IPR018261">
    <property type="entry name" value="Ribosomal_bL27_CS"/>
</dbReference>
<dbReference type="NCBIfam" id="TIGR00062">
    <property type="entry name" value="L27"/>
    <property type="match status" value="1"/>
</dbReference>
<dbReference type="PANTHER" id="PTHR15893:SF0">
    <property type="entry name" value="LARGE RIBOSOMAL SUBUNIT PROTEIN BL27M"/>
    <property type="match status" value="1"/>
</dbReference>
<dbReference type="PANTHER" id="PTHR15893">
    <property type="entry name" value="RIBOSOMAL PROTEIN L27"/>
    <property type="match status" value="1"/>
</dbReference>
<dbReference type="Pfam" id="PF01016">
    <property type="entry name" value="Ribosomal_L27"/>
    <property type="match status" value="1"/>
</dbReference>
<dbReference type="PRINTS" id="PR00063">
    <property type="entry name" value="RIBOSOMALL27"/>
</dbReference>
<dbReference type="SUPFAM" id="SSF110324">
    <property type="entry name" value="Ribosomal L27 protein-like"/>
    <property type="match status" value="1"/>
</dbReference>
<dbReference type="PROSITE" id="PS00831">
    <property type="entry name" value="RIBOSOMAL_L27"/>
    <property type="match status" value="1"/>
</dbReference>